<name>LIPA_SHIFL</name>
<accession>P60719</accession>
<accession>P25845</accession>
<accession>P77595</accession>
<dbReference type="EC" id="2.8.1.8" evidence="1"/>
<dbReference type="EMBL" id="AE005674">
    <property type="protein sequence ID" value="AAN42289.1"/>
    <property type="molecule type" value="Genomic_DNA"/>
</dbReference>
<dbReference type="EMBL" id="AE014073">
    <property type="protein sequence ID" value="AAP16160.1"/>
    <property type="molecule type" value="Genomic_DNA"/>
</dbReference>
<dbReference type="RefSeq" id="NP_706582.1">
    <property type="nucleotide sequence ID" value="NC_004337.2"/>
</dbReference>
<dbReference type="RefSeq" id="WP_000042632.1">
    <property type="nucleotide sequence ID" value="NZ_WPGW01000002.1"/>
</dbReference>
<dbReference type="SMR" id="P60719"/>
<dbReference type="STRING" id="198214.SF0653"/>
<dbReference type="PaxDb" id="198214-SF0653"/>
<dbReference type="GeneID" id="1023613"/>
<dbReference type="GeneID" id="93776854"/>
<dbReference type="KEGG" id="sfl:SF0653"/>
<dbReference type="KEGG" id="sfx:S0675"/>
<dbReference type="PATRIC" id="fig|198214.7.peg.760"/>
<dbReference type="HOGENOM" id="CLU_033144_2_1_6"/>
<dbReference type="UniPathway" id="UPA00538">
    <property type="reaction ID" value="UER00593"/>
</dbReference>
<dbReference type="Proteomes" id="UP000001006">
    <property type="component" value="Chromosome"/>
</dbReference>
<dbReference type="Proteomes" id="UP000002673">
    <property type="component" value="Chromosome"/>
</dbReference>
<dbReference type="GO" id="GO:0005737">
    <property type="term" value="C:cytoplasm"/>
    <property type="evidence" value="ECO:0007669"/>
    <property type="project" value="UniProtKB-SubCell"/>
</dbReference>
<dbReference type="GO" id="GO:0051539">
    <property type="term" value="F:4 iron, 4 sulfur cluster binding"/>
    <property type="evidence" value="ECO:0007669"/>
    <property type="project" value="UniProtKB-UniRule"/>
</dbReference>
<dbReference type="GO" id="GO:0016992">
    <property type="term" value="F:lipoate synthase activity"/>
    <property type="evidence" value="ECO:0007669"/>
    <property type="project" value="UniProtKB-UniRule"/>
</dbReference>
<dbReference type="GO" id="GO:0046872">
    <property type="term" value="F:metal ion binding"/>
    <property type="evidence" value="ECO:0007669"/>
    <property type="project" value="UniProtKB-KW"/>
</dbReference>
<dbReference type="CDD" id="cd01335">
    <property type="entry name" value="Radical_SAM"/>
    <property type="match status" value="1"/>
</dbReference>
<dbReference type="FunFam" id="3.20.20.70:FF:000023">
    <property type="entry name" value="Lipoyl synthase"/>
    <property type="match status" value="1"/>
</dbReference>
<dbReference type="Gene3D" id="3.20.20.70">
    <property type="entry name" value="Aldolase class I"/>
    <property type="match status" value="1"/>
</dbReference>
<dbReference type="HAMAP" id="MF_00206">
    <property type="entry name" value="Lipoyl_synth"/>
    <property type="match status" value="1"/>
</dbReference>
<dbReference type="InterPro" id="IPR013785">
    <property type="entry name" value="Aldolase_TIM"/>
</dbReference>
<dbReference type="InterPro" id="IPR006638">
    <property type="entry name" value="Elp3/MiaA/NifB-like_rSAM"/>
</dbReference>
<dbReference type="InterPro" id="IPR031691">
    <property type="entry name" value="LIAS_N"/>
</dbReference>
<dbReference type="InterPro" id="IPR003698">
    <property type="entry name" value="Lipoyl_synth"/>
</dbReference>
<dbReference type="InterPro" id="IPR007197">
    <property type="entry name" value="rSAM"/>
</dbReference>
<dbReference type="NCBIfam" id="TIGR00510">
    <property type="entry name" value="lipA"/>
    <property type="match status" value="1"/>
</dbReference>
<dbReference type="NCBIfam" id="NF004019">
    <property type="entry name" value="PRK05481.1"/>
    <property type="match status" value="1"/>
</dbReference>
<dbReference type="NCBIfam" id="NF009544">
    <property type="entry name" value="PRK12928.1"/>
    <property type="match status" value="1"/>
</dbReference>
<dbReference type="PANTHER" id="PTHR10949">
    <property type="entry name" value="LIPOYL SYNTHASE"/>
    <property type="match status" value="1"/>
</dbReference>
<dbReference type="PANTHER" id="PTHR10949:SF0">
    <property type="entry name" value="LIPOYL SYNTHASE, MITOCHONDRIAL"/>
    <property type="match status" value="1"/>
</dbReference>
<dbReference type="Pfam" id="PF16881">
    <property type="entry name" value="LIAS_N"/>
    <property type="match status" value="1"/>
</dbReference>
<dbReference type="Pfam" id="PF04055">
    <property type="entry name" value="Radical_SAM"/>
    <property type="match status" value="1"/>
</dbReference>
<dbReference type="PIRSF" id="PIRSF005963">
    <property type="entry name" value="Lipoyl_synth"/>
    <property type="match status" value="1"/>
</dbReference>
<dbReference type="SFLD" id="SFLDF00271">
    <property type="entry name" value="lipoyl_synthase"/>
    <property type="match status" value="1"/>
</dbReference>
<dbReference type="SFLD" id="SFLDG01058">
    <property type="entry name" value="lipoyl_synthase_like"/>
    <property type="match status" value="1"/>
</dbReference>
<dbReference type="SMART" id="SM00729">
    <property type="entry name" value="Elp3"/>
    <property type="match status" value="1"/>
</dbReference>
<dbReference type="SUPFAM" id="SSF102114">
    <property type="entry name" value="Radical SAM enzymes"/>
    <property type="match status" value="1"/>
</dbReference>
<dbReference type="PROSITE" id="PS51918">
    <property type="entry name" value="RADICAL_SAM"/>
    <property type="match status" value="1"/>
</dbReference>
<sequence length="321" mass="36072">MSKPIVMERGVKYRDADKMALIPVKNVATEREALLRKPEWMKIKLPADSTRIQGIKAAMRKNGLHSVCEEASCPNLAECFNHGTATFMILGAICTRRCPFCDVAHGRPVAPDANEPVKLAQTIADMALRYVVITSVDRDDLRDGGAQHFADCITAIREKSPQIKIETLVPDFRGRMDRALDILTATPPDVFNHNLENVPRIYRQVRPGADYNWSLKLLERFKEAHPEIPTKSGLMVGLGETNEEIIEVMRDLRRHGVTMLTLGQYLQPSRHHLPVQRYVSPDEFDEMKAEALAMGFTHAACGPFVRSSYHADLQAKGMEVK</sequence>
<protein>
    <recommendedName>
        <fullName evidence="1">Lipoyl synthase</fullName>
        <ecNumber evidence="1">2.8.1.8</ecNumber>
    </recommendedName>
    <alternativeName>
        <fullName evidence="1">Lip-syn</fullName>
        <shortName evidence="1">LS</shortName>
    </alternativeName>
    <alternativeName>
        <fullName evidence="1">Lipoate synthase</fullName>
    </alternativeName>
    <alternativeName>
        <fullName evidence="1">Lipoic acid synthase</fullName>
    </alternativeName>
    <alternativeName>
        <fullName evidence="1">Sulfur insertion protein LipA</fullName>
    </alternativeName>
</protein>
<proteinExistence type="inferred from homology"/>
<evidence type="ECO:0000255" key="1">
    <source>
        <dbReference type="HAMAP-Rule" id="MF_00206"/>
    </source>
</evidence>
<evidence type="ECO:0000255" key="2">
    <source>
        <dbReference type="PROSITE-ProRule" id="PRU01266"/>
    </source>
</evidence>
<comment type="function">
    <text evidence="1">Catalyzes the radical-mediated insertion of two sulfur atoms into the C-6 and C-8 positions of the octanoyl moiety bound to the lipoyl domains of lipoate-dependent enzymes, thereby converting the octanoylated domains into lipoylated derivatives.</text>
</comment>
<comment type="catalytic activity">
    <reaction evidence="1">
        <text>[[Fe-S] cluster scaffold protein carrying a second [4Fe-4S](2+) cluster] + N(6)-octanoyl-L-lysyl-[protein] + 2 oxidized [2Fe-2S]-[ferredoxin] + 2 S-adenosyl-L-methionine + 4 H(+) = [[Fe-S] cluster scaffold protein] + N(6)-[(R)-dihydrolipoyl]-L-lysyl-[protein] + 4 Fe(3+) + 2 hydrogen sulfide + 2 5'-deoxyadenosine + 2 L-methionine + 2 reduced [2Fe-2S]-[ferredoxin]</text>
        <dbReference type="Rhea" id="RHEA:16585"/>
        <dbReference type="Rhea" id="RHEA-COMP:9928"/>
        <dbReference type="Rhea" id="RHEA-COMP:10000"/>
        <dbReference type="Rhea" id="RHEA-COMP:10001"/>
        <dbReference type="Rhea" id="RHEA-COMP:10475"/>
        <dbReference type="Rhea" id="RHEA-COMP:14568"/>
        <dbReference type="Rhea" id="RHEA-COMP:14569"/>
        <dbReference type="ChEBI" id="CHEBI:15378"/>
        <dbReference type="ChEBI" id="CHEBI:17319"/>
        <dbReference type="ChEBI" id="CHEBI:29034"/>
        <dbReference type="ChEBI" id="CHEBI:29919"/>
        <dbReference type="ChEBI" id="CHEBI:33722"/>
        <dbReference type="ChEBI" id="CHEBI:33737"/>
        <dbReference type="ChEBI" id="CHEBI:33738"/>
        <dbReference type="ChEBI" id="CHEBI:57844"/>
        <dbReference type="ChEBI" id="CHEBI:59789"/>
        <dbReference type="ChEBI" id="CHEBI:78809"/>
        <dbReference type="ChEBI" id="CHEBI:83100"/>
        <dbReference type="EC" id="2.8.1.8"/>
    </reaction>
</comment>
<comment type="cofactor">
    <cofactor evidence="1">
        <name>[4Fe-4S] cluster</name>
        <dbReference type="ChEBI" id="CHEBI:49883"/>
    </cofactor>
    <text evidence="1">Binds 2 [4Fe-4S] clusters per subunit. One cluster is coordinated with 3 cysteines and an exchangeable S-adenosyl-L-methionine.</text>
</comment>
<comment type="pathway">
    <text evidence="1">Protein modification; protein lipoylation via endogenous pathway; protein N(6)-(lipoyl)lysine from octanoyl-[acyl-carrier-protein]: step 2/2.</text>
</comment>
<comment type="subcellular location">
    <subcellularLocation>
        <location evidence="1">Cytoplasm</location>
    </subcellularLocation>
</comment>
<comment type="similarity">
    <text evidence="1">Belongs to the radical SAM superfamily. Lipoyl synthase family.</text>
</comment>
<reference key="1">
    <citation type="journal article" date="2002" name="Nucleic Acids Res.">
        <title>Genome sequence of Shigella flexneri 2a: insights into pathogenicity through comparison with genomes of Escherichia coli K12 and O157.</title>
        <authorList>
            <person name="Jin Q."/>
            <person name="Yuan Z."/>
            <person name="Xu J."/>
            <person name="Wang Y."/>
            <person name="Shen Y."/>
            <person name="Lu W."/>
            <person name="Wang J."/>
            <person name="Liu H."/>
            <person name="Yang J."/>
            <person name="Yang F."/>
            <person name="Zhang X."/>
            <person name="Zhang J."/>
            <person name="Yang G."/>
            <person name="Wu H."/>
            <person name="Qu D."/>
            <person name="Dong J."/>
            <person name="Sun L."/>
            <person name="Xue Y."/>
            <person name="Zhao A."/>
            <person name="Gao Y."/>
            <person name="Zhu J."/>
            <person name="Kan B."/>
            <person name="Ding K."/>
            <person name="Chen S."/>
            <person name="Cheng H."/>
            <person name="Yao Z."/>
            <person name="He B."/>
            <person name="Chen R."/>
            <person name="Ma D."/>
            <person name="Qiang B."/>
            <person name="Wen Y."/>
            <person name="Hou Y."/>
            <person name="Yu J."/>
        </authorList>
    </citation>
    <scope>NUCLEOTIDE SEQUENCE [LARGE SCALE GENOMIC DNA]</scope>
    <source>
        <strain>301 / Serotype 2a</strain>
    </source>
</reference>
<reference key="2">
    <citation type="journal article" date="2003" name="Infect. Immun.">
        <title>Complete genome sequence and comparative genomics of Shigella flexneri serotype 2a strain 2457T.</title>
        <authorList>
            <person name="Wei J."/>
            <person name="Goldberg M.B."/>
            <person name="Burland V."/>
            <person name="Venkatesan M.M."/>
            <person name="Deng W."/>
            <person name="Fournier G."/>
            <person name="Mayhew G.F."/>
            <person name="Plunkett G. III"/>
            <person name="Rose D.J."/>
            <person name="Darling A."/>
            <person name="Mau B."/>
            <person name="Perna N.T."/>
            <person name="Payne S.M."/>
            <person name="Runyen-Janecky L.J."/>
            <person name="Zhou S."/>
            <person name="Schwartz D.C."/>
            <person name="Blattner F.R."/>
        </authorList>
    </citation>
    <scope>NUCLEOTIDE SEQUENCE [LARGE SCALE GENOMIC DNA]</scope>
    <source>
        <strain>ATCC 700930 / 2457T / Serotype 2a</strain>
    </source>
</reference>
<feature type="chain" id="PRO_0000102356" description="Lipoyl synthase">
    <location>
        <begin position="1"/>
        <end position="321"/>
    </location>
</feature>
<feature type="domain" description="Radical SAM core" evidence="2">
    <location>
        <begin position="80"/>
        <end position="297"/>
    </location>
</feature>
<feature type="binding site" evidence="1">
    <location>
        <position position="68"/>
    </location>
    <ligand>
        <name>[4Fe-4S] cluster</name>
        <dbReference type="ChEBI" id="CHEBI:49883"/>
        <label>1</label>
    </ligand>
</feature>
<feature type="binding site" evidence="1">
    <location>
        <position position="73"/>
    </location>
    <ligand>
        <name>[4Fe-4S] cluster</name>
        <dbReference type="ChEBI" id="CHEBI:49883"/>
        <label>1</label>
    </ligand>
</feature>
<feature type="binding site" evidence="1">
    <location>
        <position position="79"/>
    </location>
    <ligand>
        <name>[4Fe-4S] cluster</name>
        <dbReference type="ChEBI" id="CHEBI:49883"/>
        <label>1</label>
    </ligand>
</feature>
<feature type="binding site" evidence="1">
    <location>
        <position position="94"/>
    </location>
    <ligand>
        <name>[4Fe-4S] cluster</name>
        <dbReference type="ChEBI" id="CHEBI:49883"/>
        <label>2</label>
        <note>4Fe-4S-S-AdoMet</note>
    </ligand>
</feature>
<feature type="binding site" evidence="1">
    <location>
        <position position="98"/>
    </location>
    <ligand>
        <name>[4Fe-4S] cluster</name>
        <dbReference type="ChEBI" id="CHEBI:49883"/>
        <label>2</label>
        <note>4Fe-4S-S-AdoMet</note>
    </ligand>
</feature>
<feature type="binding site" evidence="1">
    <location>
        <position position="101"/>
    </location>
    <ligand>
        <name>[4Fe-4S] cluster</name>
        <dbReference type="ChEBI" id="CHEBI:49883"/>
        <label>2</label>
        <note>4Fe-4S-S-AdoMet</note>
    </ligand>
</feature>
<feature type="binding site" evidence="1">
    <location>
        <position position="308"/>
    </location>
    <ligand>
        <name>[4Fe-4S] cluster</name>
        <dbReference type="ChEBI" id="CHEBI:49883"/>
        <label>1</label>
    </ligand>
</feature>
<organism>
    <name type="scientific">Shigella flexneri</name>
    <dbReference type="NCBI Taxonomy" id="623"/>
    <lineage>
        <taxon>Bacteria</taxon>
        <taxon>Pseudomonadati</taxon>
        <taxon>Pseudomonadota</taxon>
        <taxon>Gammaproteobacteria</taxon>
        <taxon>Enterobacterales</taxon>
        <taxon>Enterobacteriaceae</taxon>
        <taxon>Shigella</taxon>
    </lineage>
</organism>
<gene>
    <name evidence="1" type="primary">lipA</name>
    <name type="ordered locus">SF0653</name>
    <name type="ordered locus">S0675</name>
</gene>
<keyword id="KW-0004">4Fe-4S</keyword>
<keyword id="KW-0963">Cytoplasm</keyword>
<keyword id="KW-0408">Iron</keyword>
<keyword id="KW-0411">Iron-sulfur</keyword>
<keyword id="KW-0479">Metal-binding</keyword>
<keyword id="KW-1185">Reference proteome</keyword>
<keyword id="KW-0949">S-adenosyl-L-methionine</keyword>
<keyword id="KW-0808">Transferase</keyword>